<sequence length="912" mass="104336">MFKSLPEEEAFRALTLTLQLVASLHDIVAYTFSFAKLGNCPACFDLPLSPNPLMRDWGGAEGIGNELQELQKMIDSLQRPQDPSQVAQALLLRREVTLLQFDAAMRHLLRTFLAAGNAPAYQSVAESACYGLPPLSNALGKSIFSSQLSLPQPLDPWSPQAFALFPWRAFLEDGGPFPVISSVPDTLEYDMQMCLCGLSDCDRRVAHGELVGVQMLMEDVLLGSCHVIRKASTEWQAALDNAQPDWSKLPGLYPNQLESHPKASALLEGQCDVVMSLSLLKSFLILWKRLEVLKEHWGRFKLRGQDINSALLHRQFSELYEAEILYPSMKALARQMGKEDEFEELMLRSQSILPPKGASEIEIKTQQLQKLLESLEIHMIQEVLRKVNREMTLFLSEKSKEESTLPTDRWKHQVMKENFSVMRPQIVERFVQRLMEDSQDDGPKITFRREHLEACILSLGCDVMARERSNFETYSMCYEHILQHTRQKLSQKEQEVDLLRRSQVPSEDCAGQVAELSHDMIMEITALRAQLTDLEEENLNLKIQIRKEVQEEYRELVQALFLTCLRIKEKLDENQFNLIQKVCELIGEVRAEGIANVKQLKKTWGSARPDEETKENTAKEQLCALEQDHSSTLAALLCKARSLGRWRLAVQQAHLRGQLSRAEMESILSKKECLRIKLMAEQEAALLHQQLLAARQALTKAQTDNRKLWRQNDTQAQLLRELEHRVTQDSVTRQQLDIIKTSGMEKLLKDVEQKEQKLQLLTEEAERASKRGQLQQKKMDRDLKQMRNRLAQERSVKLDAFQRVQELQSQLYDIQWPSVQMGSPVGLRSQTHCSLSSASTLSRHPHHHFSKTHFVGSKMTRRIQRPKTVPVKHNRRIEDGSLPSVKENVQLTTFQAQTAPSGISFRPESFSS</sequence>
<dbReference type="EMBL" id="AK050292">
    <property type="protein sequence ID" value="BAE20670.1"/>
    <property type="molecule type" value="mRNA"/>
</dbReference>
<dbReference type="EMBL" id="AK137750">
    <property type="protein sequence ID" value="BAE23488.1"/>
    <property type="molecule type" value="mRNA"/>
</dbReference>
<dbReference type="EMBL" id="AC132290">
    <property type="status" value="NOT_ANNOTATED_CDS"/>
    <property type="molecule type" value="Genomic_DNA"/>
</dbReference>
<dbReference type="EMBL" id="AC161426">
    <property type="status" value="NOT_ANNOTATED_CDS"/>
    <property type="molecule type" value="Genomic_DNA"/>
</dbReference>
<dbReference type="EMBL" id="BC112401">
    <property type="protein sequence ID" value="AAI12402.2"/>
    <property type="molecule type" value="mRNA"/>
</dbReference>
<dbReference type="CCDS" id="CCDS56700.3">
    <molecule id="Q0VG85-6"/>
</dbReference>
<dbReference type="RefSeq" id="NP_001290398.1">
    <property type="nucleotide sequence ID" value="NM_001303469.1"/>
</dbReference>
<dbReference type="RefSeq" id="NP_001345491.1">
    <molecule id="Q0VG85-6"/>
    <property type="nucleotide sequence ID" value="NM_001358562.1"/>
</dbReference>
<dbReference type="RefSeq" id="XP_006512962.1">
    <property type="nucleotide sequence ID" value="XM_006512899.3"/>
</dbReference>
<dbReference type="SMR" id="Q0VG85"/>
<dbReference type="STRING" id="10090.ENSMUSP00000135966"/>
<dbReference type="iPTMnet" id="Q0VG85"/>
<dbReference type="PhosphoSitePlus" id="Q0VG85"/>
<dbReference type="PaxDb" id="10090-ENSMUSP00000135966"/>
<dbReference type="ProteomicsDB" id="283709">
    <molecule id="Q0VG85-5"/>
</dbReference>
<dbReference type="ProteomicsDB" id="283710">
    <molecule id="Q0VG85-2"/>
</dbReference>
<dbReference type="ProteomicsDB" id="283712">
    <molecule id="Q0VG85-6"/>
</dbReference>
<dbReference type="Ensembl" id="ENSMUST00000189488.3">
    <molecule id="Q0VG85-6"/>
    <property type="protein sequence ID" value="ENSMUSP00000140774.3"/>
    <property type="gene ID" value="ENSMUSG00000075225.17"/>
</dbReference>
<dbReference type="UCSC" id="uc007exw.2">
    <molecule id="Q0VG85-5"/>
    <property type="organism name" value="mouse"/>
</dbReference>
<dbReference type="UCSC" id="uc007exx.1">
    <molecule id="Q0VG85-2"/>
    <property type="organism name" value="mouse"/>
</dbReference>
<dbReference type="AGR" id="MGI:1923223"/>
<dbReference type="MGI" id="MGI:1923223">
    <property type="gene designation" value="Ccdc162"/>
</dbReference>
<dbReference type="VEuPathDB" id="HostDB:ENSMUSG00000075225"/>
<dbReference type="eggNOG" id="ENOG502QRID">
    <property type="taxonomic scope" value="Eukaryota"/>
</dbReference>
<dbReference type="GeneTree" id="ENSGT00940000165946"/>
<dbReference type="HOGENOM" id="CLU_007479_0_0_1"/>
<dbReference type="InParanoid" id="Q0VG85"/>
<dbReference type="OMA" id="YECAILR"/>
<dbReference type="PhylomeDB" id="Q0VG85"/>
<dbReference type="BioGRID-ORCS" id="75973">
    <property type="hits" value="1 hit in 57 CRISPR screens"/>
</dbReference>
<dbReference type="ChiTaRS" id="Ccdc162">
    <property type="organism name" value="mouse"/>
</dbReference>
<dbReference type="PRO" id="PR:Q0VG85"/>
<dbReference type="Proteomes" id="UP000000589">
    <property type="component" value="Chromosome 10"/>
</dbReference>
<dbReference type="RNAct" id="Q0VG85">
    <property type="molecule type" value="protein"/>
</dbReference>
<dbReference type="Bgee" id="ENSMUSG00000075225">
    <property type="expression patterns" value="Expressed in animal zygote and 70 other cell types or tissues"/>
</dbReference>
<dbReference type="ExpressionAtlas" id="Q0VG85">
    <property type="expression patterns" value="baseline and differential"/>
</dbReference>
<dbReference type="InterPro" id="IPR040401">
    <property type="entry name" value="CCDC162"/>
</dbReference>
<dbReference type="PANTHER" id="PTHR33331:SF13">
    <property type="entry name" value="COILED-COIL DOMAIN CONTAINING 162"/>
    <property type="match status" value="1"/>
</dbReference>
<dbReference type="PANTHER" id="PTHR33331">
    <property type="entry name" value="COILED-COIL DOMAIN-CONTAINING PROTEIN 162"/>
    <property type="match status" value="1"/>
</dbReference>
<keyword id="KW-0025">Alternative splicing</keyword>
<keyword id="KW-0175">Coiled coil</keyword>
<keyword id="KW-0903">Direct protein sequencing</keyword>
<keyword id="KW-1185">Reference proteome</keyword>
<organism>
    <name type="scientific">Mus musculus</name>
    <name type="common">Mouse</name>
    <dbReference type="NCBI Taxonomy" id="10090"/>
    <lineage>
        <taxon>Eukaryota</taxon>
        <taxon>Metazoa</taxon>
        <taxon>Chordata</taxon>
        <taxon>Craniata</taxon>
        <taxon>Vertebrata</taxon>
        <taxon>Euteleostomi</taxon>
        <taxon>Mammalia</taxon>
        <taxon>Eutheria</taxon>
        <taxon>Euarchontoglires</taxon>
        <taxon>Glires</taxon>
        <taxon>Rodentia</taxon>
        <taxon>Myomorpha</taxon>
        <taxon>Muroidea</taxon>
        <taxon>Muridae</taxon>
        <taxon>Murinae</taxon>
        <taxon>Mus</taxon>
        <taxon>Mus</taxon>
    </lineage>
</organism>
<accession>Q0VG85</accession>
<accession>A0A087WRU3</accession>
<accession>Q3UUY5</accession>
<accession>Q3V339</accession>
<comment type="alternative products">
    <event type="alternative splicing"/>
    <isoform>
        <id>Q0VG85-5</id>
        <name>5</name>
        <sequence type="displayed"/>
    </isoform>
    <isoform>
        <id>Q0VG85-2</id>
        <name>2</name>
        <sequence type="described" ref="VSP_040687 VSP_040690 VSP_040691 VSP_040692"/>
    </isoform>
    <isoform>
        <id>Q0VG85-3</id>
        <name>3</name>
        <sequence type="described" ref="VSP_040688 VSP_040689"/>
    </isoform>
    <isoform>
        <id>Q0VG85-6</id>
        <name>4</name>
        <sequence type="described" ref="VSP_059001"/>
    </isoform>
</comment>
<evidence type="ECO:0000255" key="1"/>
<evidence type="ECO:0000303" key="2">
    <source>
    </source>
</evidence>
<evidence type="ECO:0000305" key="3"/>
<evidence type="ECO:0000312" key="4">
    <source>
        <dbReference type="MGI" id="MGI:1923223"/>
    </source>
</evidence>
<gene>
    <name evidence="4" type="primary">Ccdc162</name>
</gene>
<feature type="chain" id="PRO_0000307298" description="Coiled-coil domain-containing protein 162">
    <location>
        <begin position="1"/>
        <end position="912"/>
    </location>
</feature>
<feature type="coiled-coil region" evidence="1">
    <location>
        <begin position="1"/>
        <end position="35"/>
    </location>
</feature>
<feature type="coiled-coil region" evidence="1">
    <location>
        <begin position="220"/>
        <end position="276"/>
    </location>
</feature>
<feature type="splice variant" id="VSP_040688" description="In isoform 3." evidence="2">
    <location>
        <begin position="1"/>
        <end position="707"/>
    </location>
</feature>
<feature type="splice variant" id="VSP_040687" description="In isoform 2." evidence="2">
    <location>
        <begin position="1"/>
        <end position="519"/>
    </location>
</feature>
<feature type="splice variant" id="VSP_059001" description="In isoform 4.">
    <original>M</original>
    <variation>MDSVYKFSSTERIVLLEKELAVKLSELKTEVEDQGLFPGTGNRIFSSVQIPKDVAHFRREREAALKRTLQVAESKPLVIQADVLKRELESCLRREYTPENLPLLLLQYYTERITQLGQSKYLHVLRWKRLCQTSMAMEELYPLYKKQVDYIMQEFNDSVQRAERLSVARENLLMGKNNRPDLVTQEDLAIYTRWLVCHLHALRTIHHFLQALQYLPISRVLSLAAKQVSGSSEEDGKACVTDLHAASPGPLGPHVSGSGRTDAAFVLPQHVTDRDDLKPQLRRLLSHFHIPDDVQKLSDSAKEMGLFSSVSQNFQSIFMEQQRMWTFPDYEAGRGNVQNPTMSGPTTTLRKRADWIPFVKVKPKCDPWQKKMLTRLKERKRIDELMNLQSQFLKISDPVRVMQVLQDHAAKTVPMASNHPSRPPAQPLHPRNYDQVWKNIYSNPKLYQAENPSDDDFAKPHLSQSSDGSLKQRTETGYNFAVALQLLGLSDGTEPDRNPVLMRGAYLSFLCLRHLHIRELQRICLGVLNFFRSVERTLTMNTSGLTLVSGTLVPTLGDSSWINMSKGGMGTLQGLGTHHYIHGTPAEHKVHSIQFLEFSEAENQDDFHTTQAGYVHTQDQLGEYVVYDSALQDLKELESELLLIASHYIEKEKSHRGECRSEGSQLLGWAHANVDRFAVLYDLWTCETNLLEGKRQLLDSYFEAYQHTLDPEERFALAQAMTDIMHRRPKFDLSHSYFTKAYRDDCTCLRLHLQLVRGILSHHLEQQRDYVQRLWRGDHPEAPKTFGLPLNVICKQFVSISNSCPASGKVHPLELHPSLGLAGLIPKALEHLFREARHAHKAASPSSLAQIEICSLQLALDLWLSPVKPEAWYSAQLQRELFSAQVMGDPFLMEEVGLLALRSAVDKGVKQGQDFHTLLLDTFSRLLELLTLRHRLIETSVESAYLAGLYKELALEMGFEESHLHLRPVHFEFASHKDKVDPPPPVFITSLLEDSSRVDRYCPTSLVLAISELDDNQIGKFSFHTKEAILKLFVHSGVENMQVTLACQTAQRNALMVAIQQAFFYHIPGAGSLVDLKETSSDPRHHGGVSPCRRDSRTTNGKECLLLTPTLKTPDTFTHSSGFKTSKRAPEAFVSIQLEKAGLRDLMLNTFLHRKQTMMDQIKSPDDVEKVKKELIVEYCQKLNRRMSHYSLRGQIMAYCNSLRVLLDDFPTIRNTFFMVGQPNEKKGLKDSSGELKADSSRSFQPRPRSLLSADGRVFLNLWFIPHPSEVLFM</variation>
    <location>
        <position position="1"/>
    </location>
</feature>
<feature type="splice variant" id="VSP_040690" description="In isoform 2." evidence="2">
    <location>
        <begin position="620"/>
        <end position="664"/>
    </location>
</feature>
<feature type="splice variant" id="VSP_040689" description="In isoform 3." evidence="2">
    <original>LWRQNDTQ</original>
    <variation>MKESHIRK</variation>
    <location>
        <begin position="708"/>
        <end position="715"/>
    </location>
</feature>
<feature type="splice variant" id="VSP_040691" description="In isoform 2." evidence="2">
    <original>MRNRLAQERSVKLDAFQRVQELQSQLYDIQWPSVQMG</original>
    <variation>VRAADPDLKGLRSQLSMEQLFPGLSVPLTAFSLLCQF</variation>
    <location>
        <begin position="786"/>
        <end position="822"/>
    </location>
</feature>
<feature type="splice variant" id="VSP_040692" description="In isoform 2." evidence="2">
    <location>
        <begin position="823"/>
        <end position="912"/>
    </location>
</feature>
<reference key="1">
    <citation type="journal article" date="2005" name="Science">
        <title>The transcriptional landscape of the mammalian genome.</title>
        <authorList>
            <person name="Carninci P."/>
            <person name="Kasukawa T."/>
            <person name="Katayama S."/>
            <person name="Gough J."/>
            <person name="Frith M.C."/>
            <person name="Maeda N."/>
            <person name="Oyama R."/>
            <person name="Ravasi T."/>
            <person name="Lenhard B."/>
            <person name="Wells C."/>
            <person name="Kodzius R."/>
            <person name="Shimokawa K."/>
            <person name="Bajic V.B."/>
            <person name="Brenner S.E."/>
            <person name="Batalov S."/>
            <person name="Forrest A.R."/>
            <person name="Zavolan M."/>
            <person name="Davis M.J."/>
            <person name="Wilming L.G."/>
            <person name="Aidinis V."/>
            <person name="Allen J.E."/>
            <person name="Ambesi-Impiombato A."/>
            <person name="Apweiler R."/>
            <person name="Aturaliya R.N."/>
            <person name="Bailey T.L."/>
            <person name="Bansal M."/>
            <person name="Baxter L."/>
            <person name="Beisel K.W."/>
            <person name="Bersano T."/>
            <person name="Bono H."/>
            <person name="Chalk A.M."/>
            <person name="Chiu K.P."/>
            <person name="Choudhary V."/>
            <person name="Christoffels A."/>
            <person name="Clutterbuck D.R."/>
            <person name="Crowe M.L."/>
            <person name="Dalla E."/>
            <person name="Dalrymple B.P."/>
            <person name="de Bono B."/>
            <person name="Della Gatta G."/>
            <person name="di Bernardo D."/>
            <person name="Down T."/>
            <person name="Engstrom P."/>
            <person name="Fagiolini M."/>
            <person name="Faulkner G."/>
            <person name="Fletcher C.F."/>
            <person name="Fukushima T."/>
            <person name="Furuno M."/>
            <person name="Futaki S."/>
            <person name="Gariboldi M."/>
            <person name="Georgii-Hemming P."/>
            <person name="Gingeras T.R."/>
            <person name="Gojobori T."/>
            <person name="Green R.E."/>
            <person name="Gustincich S."/>
            <person name="Harbers M."/>
            <person name="Hayashi Y."/>
            <person name="Hensch T.K."/>
            <person name="Hirokawa N."/>
            <person name="Hill D."/>
            <person name="Huminiecki L."/>
            <person name="Iacono M."/>
            <person name="Ikeo K."/>
            <person name="Iwama A."/>
            <person name="Ishikawa T."/>
            <person name="Jakt M."/>
            <person name="Kanapin A."/>
            <person name="Katoh M."/>
            <person name="Kawasawa Y."/>
            <person name="Kelso J."/>
            <person name="Kitamura H."/>
            <person name="Kitano H."/>
            <person name="Kollias G."/>
            <person name="Krishnan S.P."/>
            <person name="Kruger A."/>
            <person name="Kummerfeld S.K."/>
            <person name="Kurochkin I.V."/>
            <person name="Lareau L.F."/>
            <person name="Lazarevic D."/>
            <person name="Lipovich L."/>
            <person name="Liu J."/>
            <person name="Liuni S."/>
            <person name="McWilliam S."/>
            <person name="Madan Babu M."/>
            <person name="Madera M."/>
            <person name="Marchionni L."/>
            <person name="Matsuda H."/>
            <person name="Matsuzawa S."/>
            <person name="Miki H."/>
            <person name="Mignone F."/>
            <person name="Miyake S."/>
            <person name="Morris K."/>
            <person name="Mottagui-Tabar S."/>
            <person name="Mulder N."/>
            <person name="Nakano N."/>
            <person name="Nakauchi H."/>
            <person name="Ng P."/>
            <person name="Nilsson R."/>
            <person name="Nishiguchi S."/>
            <person name="Nishikawa S."/>
            <person name="Nori F."/>
            <person name="Ohara O."/>
            <person name="Okazaki Y."/>
            <person name="Orlando V."/>
            <person name="Pang K.C."/>
            <person name="Pavan W.J."/>
            <person name="Pavesi G."/>
            <person name="Pesole G."/>
            <person name="Petrovsky N."/>
            <person name="Piazza S."/>
            <person name="Reed J."/>
            <person name="Reid J.F."/>
            <person name="Ring B.Z."/>
            <person name="Ringwald M."/>
            <person name="Rost B."/>
            <person name="Ruan Y."/>
            <person name="Salzberg S.L."/>
            <person name="Sandelin A."/>
            <person name="Schneider C."/>
            <person name="Schoenbach C."/>
            <person name="Sekiguchi K."/>
            <person name="Semple C.A."/>
            <person name="Seno S."/>
            <person name="Sessa L."/>
            <person name="Sheng Y."/>
            <person name="Shibata Y."/>
            <person name="Shimada H."/>
            <person name="Shimada K."/>
            <person name="Silva D."/>
            <person name="Sinclair B."/>
            <person name="Sperling S."/>
            <person name="Stupka E."/>
            <person name="Sugiura K."/>
            <person name="Sultana R."/>
            <person name="Takenaka Y."/>
            <person name="Taki K."/>
            <person name="Tammoja K."/>
            <person name="Tan S.L."/>
            <person name="Tang S."/>
            <person name="Taylor M.S."/>
            <person name="Tegner J."/>
            <person name="Teichmann S.A."/>
            <person name="Ueda H.R."/>
            <person name="van Nimwegen E."/>
            <person name="Verardo R."/>
            <person name="Wei C.L."/>
            <person name="Yagi K."/>
            <person name="Yamanishi H."/>
            <person name="Zabarovsky E."/>
            <person name="Zhu S."/>
            <person name="Zimmer A."/>
            <person name="Hide W."/>
            <person name="Bult C."/>
            <person name="Grimmond S.M."/>
            <person name="Teasdale R.D."/>
            <person name="Liu E.T."/>
            <person name="Brusic V."/>
            <person name="Quackenbush J."/>
            <person name="Wahlestedt C."/>
            <person name="Mattick J.S."/>
            <person name="Hume D.A."/>
            <person name="Kai C."/>
            <person name="Sasaki D."/>
            <person name="Tomaru Y."/>
            <person name="Fukuda S."/>
            <person name="Kanamori-Katayama M."/>
            <person name="Suzuki M."/>
            <person name="Aoki J."/>
            <person name="Arakawa T."/>
            <person name="Iida J."/>
            <person name="Imamura K."/>
            <person name="Itoh M."/>
            <person name="Kato T."/>
            <person name="Kawaji H."/>
            <person name="Kawagashira N."/>
            <person name="Kawashima T."/>
            <person name="Kojima M."/>
            <person name="Kondo S."/>
            <person name="Konno H."/>
            <person name="Nakano K."/>
            <person name="Ninomiya N."/>
            <person name="Nishio T."/>
            <person name="Okada M."/>
            <person name="Plessy C."/>
            <person name="Shibata K."/>
            <person name="Shiraki T."/>
            <person name="Suzuki S."/>
            <person name="Tagami M."/>
            <person name="Waki K."/>
            <person name="Watahiki A."/>
            <person name="Okamura-Oho Y."/>
            <person name="Suzuki H."/>
            <person name="Kawai J."/>
            <person name="Hayashizaki Y."/>
        </authorList>
    </citation>
    <scope>NUCLEOTIDE SEQUENCE [LARGE SCALE MRNA] (ISOFORMS 2 AND 3)</scope>
    <source>
        <strain>C57BL/6J</strain>
        <tissue>Liver</tissue>
        <tissue>Skin</tissue>
    </source>
</reference>
<reference key="2">
    <citation type="journal article" date="2009" name="PLoS Biol.">
        <title>Lineage-specific biology revealed by a finished genome assembly of the mouse.</title>
        <authorList>
            <person name="Church D.M."/>
            <person name="Goodstadt L."/>
            <person name="Hillier L.W."/>
            <person name="Zody M.C."/>
            <person name="Goldstein S."/>
            <person name="She X."/>
            <person name="Bult C.J."/>
            <person name="Agarwala R."/>
            <person name="Cherry J.L."/>
            <person name="DiCuccio M."/>
            <person name="Hlavina W."/>
            <person name="Kapustin Y."/>
            <person name="Meric P."/>
            <person name="Maglott D."/>
            <person name="Birtle Z."/>
            <person name="Marques A.C."/>
            <person name="Graves T."/>
            <person name="Zhou S."/>
            <person name="Teague B."/>
            <person name="Potamousis K."/>
            <person name="Churas C."/>
            <person name="Place M."/>
            <person name="Herschleb J."/>
            <person name="Runnheim R."/>
            <person name="Forrest D."/>
            <person name="Amos-Landgraf J."/>
            <person name="Schwartz D.C."/>
            <person name="Cheng Z."/>
            <person name="Lindblad-Toh K."/>
            <person name="Eichler E.E."/>
            <person name="Ponting C.P."/>
        </authorList>
    </citation>
    <scope>NUCLEOTIDE SEQUENCE [LARGE SCALE GENOMIC DNA]</scope>
    <source>
        <strain>C57BL/6J</strain>
    </source>
</reference>
<reference key="3">
    <citation type="journal article" date="2004" name="Genome Res.">
        <title>The status, quality, and expansion of the NIH full-length cDNA project: the Mammalian Gene Collection (MGC).</title>
        <authorList>
            <consortium name="The MGC Project Team"/>
        </authorList>
    </citation>
    <scope>NUCLEOTIDE SEQUENCE [LARGE SCALE MRNA] OF 163-912 (ISOFORM 5)</scope>
</reference>
<reference key="4">
    <citation type="submission" date="2009-01" db="UniProtKB">
        <authorList>
            <person name="Lubec G."/>
            <person name="Sunyer B."/>
            <person name="Chen W.-Q."/>
        </authorList>
    </citation>
    <scope>PROTEIN SEQUENCE OF 234-246</scope>
    <scope>IDENTIFICATION BY MASS SPECTROMETRY</scope>
    <source>
        <strain>OF1</strain>
        <tissue>Hippocampus</tissue>
    </source>
</reference>
<name>CC162_MOUSE</name>
<protein>
    <recommendedName>
        <fullName evidence="3">Coiled-coil domain-containing protein 162</fullName>
    </recommendedName>
</protein>
<proteinExistence type="evidence at protein level"/>